<proteinExistence type="inferred from homology"/>
<dbReference type="EC" id="7.1.1.-" evidence="1"/>
<dbReference type="EMBL" id="CP000087">
    <property type="protein sequence ID" value="ABE04183.1"/>
    <property type="molecule type" value="Genomic_DNA"/>
</dbReference>
<dbReference type="RefSeq" id="WP_011476798.1">
    <property type="nucleotide sequence ID" value="NC_007940.1"/>
</dbReference>
<dbReference type="SMR" id="Q1RKD1"/>
<dbReference type="KEGG" id="rbe:RBE_0102"/>
<dbReference type="eggNOG" id="COG1005">
    <property type="taxonomic scope" value="Bacteria"/>
</dbReference>
<dbReference type="HOGENOM" id="CLU_015134_0_1_5"/>
<dbReference type="OrthoDB" id="9803734at2"/>
<dbReference type="Proteomes" id="UP000001951">
    <property type="component" value="Chromosome"/>
</dbReference>
<dbReference type="GO" id="GO:0005886">
    <property type="term" value="C:plasma membrane"/>
    <property type="evidence" value="ECO:0007669"/>
    <property type="project" value="UniProtKB-SubCell"/>
</dbReference>
<dbReference type="GO" id="GO:0003954">
    <property type="term" value="F:NADH dehydrogenase activity"/>
    <property type="evidence" value="ECO:0007669"/>
    <property type="project" value="TreeGrafter"/>
</dbReference>
<dbReference type="GO" id="GO:0016655">
    <property type="term" value="F:oxidoreductase activity, acting on NAD(P)H, quinone or similar compound as acceptor"/>
    <property type="evidence" value="ECO:0007669"/>
    <property type="project" value="UniProtKB-UniRule"/>
</dbReference>
<dbReference type="GO" id="GO:0048038">
    <property type="term" value="F:quinone binding"/>
    <property type="evidence" value="ECO:0007669"/>
    <property type="project" value="UniProtKB-KW"/>
</dbReference>
<dbReference type="GO" id="GO:0009060">
    <property type="term" value="P:aerobic respiration"/>
    <property type="evidence" value="ECO:0007669"/>
    <property type="project" value="TreeGrafter"/>
</dbReference>
<dbReference type="HAMAP" id="MF_01350">
    <property type="entry name" value="NDH1_NuoH"/>
    <property type="match status" value="1"/>
</dbReference>
<dbReference type="InterPro" id="IPR001694">
    <property type="entry name" value="NADH_UbQ_OxRdtase_su1/FPO"/>
</dbReference>
<dbReference type="InterPro" id="IPR018086">
    <property type="entry name" value="NADH_UbQ_OxRdtase_su1_CS"/>
</dbReference>
<dbReference type="NCBIfam" id="NF004741">
    <property type="entry name" value="PRK06076.1-2"/>
    <property type="match status" value="1"/>
</dbReference>
<dbReference type="NCBIfam" id="NF004745">
    <property type="entry name" value="PRK06076.1-6"/>
    <property type="match status" value="1"/>
</dbReference>
<dbReference type="PANTHER" id="PTHR11432">
    <property type="entry name" value="NADH DEHYDROGENASE SUBUNIT 1"/>
    <property type="match status" value="1"/>
</dbReference>
<dbReference type="PANTHER" id="PTHR11432:SF3">
    <property type="entry name" value="NADH-UBIQUINONE OXIDOREDUCTASE CHAIN 1"/>
    <property type="match status" value="1"/>
</dbReference>
<dbReference type="Pfam" id="PF00146">
    <property type="entry name" value="NADHdh"/>
    <property type="match status" value="1"/>
</dbReference>
<dbReference type="PROSITE" id="PS00667">
    <property type="entry name" value="COMPLEX1_ND1_1"/>
    <property type="match status" value="1"/>
</dbReference>
<dbReference type="PROSITE" id="PS00668">
    <property type="entry name" value="COMPLEX1_ND1_2"/>
    <property type="match status" value="1"/>
</dbReference>
<feature type="chain" id="PRO_0000244948" description="NADH-quinone oxidoreductase subunit H">
    <location>
        <begin position="1"/>
        <end position="339"/>
    </location>
</feature>
<feature type="transmembrane region" description="Helical" evidence="1">
    <location>
        <begin position="9"/>
        <end position="29"/>
    </location>
</feature>
<feature type="transmembrane region" description="Helical" evidence="1">
    <location>
        <begin position="50"/>
        <end position="70"/>
    </location>
</feature>
<feature type="transmembrane region" description="Helical" evidence="1">
    <location>
        <begin position="82"/>
        <end position="102"/>
    </location>
</feature>
<feature type="transmembrane region" description="Helical" evidence="1">
    <location>
        <begin position="115"/>
        <end position="135"/>
    </location>
</feature>
<feature type="transmembrane region" description="Helical" evidence="1">
    <location>
        <begin position="161"/>
        <end position="181"/>
    </location>
</feature>
<feature type="transmembrane region" description="Helical" evidence="1">
    <location>
        <begin position="187"/>
        <end position="207"/>
    </location>
</feature>
<feature type="transmembrane region" description="Helical" evidence="1">
    <location>
        <begin position="235"/>
        <end position="255"/>
    </location>
</feature>
<feature type="transmembrane region" description="Helical" evidence="1">
    <location>
        <begin position="275"/>
        <end position="295"/>
    </location>
</feature>
<feature type="transmembrane region" description="Helical" evidence="1">
    <location>
        <begin position="311"/>
        <end position="331"/>
    </location>
</feature>
<keyword id="KW-0997">Cell inner membrane</keyword>
<keyword id="KW-1003">Cell membrane</keyword>
<keyword id="KW-0472">Membrane</keyword>
<keyword id="KW-0520">NAD</keyword>
<keyword id="KW-0874">Quinone</keyword>
<keyword id="KW-1278">Translocase</keyword>
<keyword id="KW-0812">Transmembrane</keyword>
<keyword id="KW-1133">Transmembrane helix</keyword>
<keyword id="KW-0830">Ubiquinone</keyword>
<evidence type="ECO:0000255" key="1">
    <source>
        <dbReference type="HAMAP-Rule" id="MF_01350"/>
    </source>
</evidence>
<accession>Q1RKD1</accession>
<protein>
    <recommendedName>
        <fullName evidence="1">NADH-quinone oxidoreductase subunit H</fullName>
        <ecNumber evidence="1">7.1.1.-</ecNumber>
    </recommendedName>
    <alternativeName>
        <fullName evidence="1">NADH dehydrogenase I subunit H</fullName>
    </alternativeName>
    <alternativeName>
        <fullName evidence="1">NDH-1 subunit H</fullName>
    </alternativeName>
</protein>
<organism>
    <name type="scientific">Rickettsia bellii (strain RML369-C)</name>
    <dbReference type="NCBI Taxonomy" id="336407"/>
    <lineage>
        <taxon>Bacteria</taxon>
        <taxon>Pseudomonadati</taxon>
        <taxon>Pseudomonadota</taxon>
        <taxon>Alphaproteobacteria</taxon>
        <taxon>Rickettsiales</taxon>
        <taxon>Rickettsiaceae</taxon>
        <taxon>Rickettsieae</taxon>
        <taxon>Rickettsia</taxon>
        <taxon>belli group</taxon>
    </lineage>
</organism>
<gene>
    <name evidence="1" type="primary">nuoH</name>
    <name type="ordered locus">RBE_0102</name>
</gene>
<sequence length="339" mass="38111">MIELFFEYIFPLIIIALKVVAITIPLILCVAYLTYAERRVIGLMQLRRGPNVVGPFGLLQPIADAVKLLFKEPIIPTNADKILFVLAPMITFILSLIGWAVIPFAKGVVLADINVGVLYILAISSLSVYGIIIAGWASNSKYAFLGAIRSSAQMISYEVSMGLVIITVLLTTGTLNLSQIVEAQRTMPWWIDLMLMPMGVVFFISVLAETNRLPFDLPEAESELVAGYNVEYSSMGFALFFLGEYANMILVSAMTTTFFLGGYLPPFNISWLDCIPGFFWFVFKVGFLLFCFLWIRATLPRYRYDQLMRLGWKVFLPLTLFWVVLVSSVLIYTDHLPNV</sequence>
<name>NUOH_RICBR</name>
<comment type="function">
    <text evidence="1">NDH-1 shuttles electrons from NADH, via FMN and iron-sulfur (Fe-S) centers, to quinones in the respiratory chain. The immediate electron acceptor for the enzyme in this species is believed to be ubiquinone. Couples the redox reaction to proton translocation (for every two electrons transferred, four hydrogen ions are translocated across the cytoplasmic membrane), and thus conserves the redox energy in a proton gradient. This subunit may bind ubiquinone.</text>
</comment>
<comment type="catalytic activity">
    <reaction evidence="1">
        <text>a quinone + NADH + 5 H(+)(in) = a quinol + NAD(+) + 4 H(+)(out)</text>
        <dbReference type="Rhea" id="RHEA:57888"/>
        <dbReference type="ChEBI" id="CHEBI:15378"/>
        <dbReference type="ChEBI" id="CHEBI:24646"/>
        <dbReference type="ChEBI" id="CHEBI:57540"/>
        <dbReference type="ChEBI" id="CHEBI:57945"/>
        <dbReference type="ChEBI" id="CHEBI:132124"/>
    </reaction>
</comment>
<comment type="subunit">
    <text evidence="1">NDH-1 is composed of 14 different subunits. Subunits NuoA, H, J, K, L, M, N constitute the membrane sector of the complex.</text>
</comment>
<comment type="subcellular location">
    <subcellularLocation>
        <location evidence="1">Cell inner membrane</location>
        <topology evidence="1">Multi-pass membrane protein</topology>
    </subcellularLocation>
</comment>
<comment type="similarity">
    <text evidence="1">Belongs to the complex I subunit 1 family.</text>
</comment>
<reference key="1">
    <citation type="journal article" date="2006" name="PLoS Genet.">
        <title>Genome sequence of Rickettsia bellii illuminates the role of amoebae in gene exchanges between intracellular pathogens.</title>
        <authorList>
            <person name="Ogata H."/>
            <person name="La Scola B."/>
            <person name="Audic S."/>
            <person name="Renesto P."/>
            <person name="Blanc G."/>
            <person name="Robert C."/>
            <person name="Fournier P.-E."/>
            <person name="Claverie J.-M."/>
            <person name="Raoult D."/>
        </authorList>
    </citation>
    <scope>NUCLEOTIDE SEQUENCE [LARGE SCALE GENOMIC DNA]</scope>
    <source>
        <strain>RML369-C</strain>
    </source>
</reference>